<sequence>MKSTIITSILFSVATVQAYSPAEQIDVQSHLLSDPTKVEGKTYDYVIAGGGLTGLTVASKLSENPKIKVLVIEKGFYESNDGPIIEDPNAYGEIFGTSVDQNYLTVPLINNRTGEIKSGLGLGGSTLINGDSWTRPDKVQIDSWEKVFGMEGWNWDNVFQYMQKAERSRPPTAAQIEAGHFYDPACHGTDGTVHAGPRDNGKPWSPLMRALMNTVSAFGVPVQKDFHCGHPRGVSMIPNNLHENQIRADAAREWLLPNYQRDNLQILTGQKVGKVLFNQTASGPKAVGVNFGTNKAVNFNVYAKQEVLLAAGSAISPLILEYSGIGIKSVLDKAGVKQLLELPVGLNMQDQTTTTVRSRANNAPGQGQAAYFANFTEVLGDHAAQGINLLDTKLDQWAEETVARGGFHNVTALKIQYENYRNWLLDEDVAFAELFFDTEGKINFDIWNLIPFTRGSVHILSSDPYLWQYANDPKFFMNELDLLGQAAATKLGRELSSAGEMKKYYAGETIPGDNLPQDATVEQWEDYVMMNFRPNWHAVSTCSMMSRELGGVVDATAKVYGTQGLRVIDGSIPPTQVSSHVMTVFYGMALRIAESVLEDYAKSA</sequence>
<organism>
    <name type="scientific">Penicillium chrysogenum</name>
    <name type="common">Penicillium notatum</name>
    <dbReference type="NCBI Taxonomy" id="5076"/>
    <lineage>
        <taxon>Eukaryota</taxon>
        <taxon>Fungi</taxon>
        <taxon>Dikarya</taxon>
        <taxon>Ascomycota</taxon>
        <taxon>Pezizomycotina</taxon>
        <taxon>Eurotiomycetes</taxon>
        <taxon>Eurotiomycetidae</taxon>
        <taxon>Eurotiales</taxon>
        <taxon>Aspergillaceae</taxon>
        <taxon>Penicillium</taxon>
        <taxon>Penicillium chrysogenum species complex</taxon>
    </lineage>
</organism>
<dbReference type="EC" id="1.1.3.4" evidence="3 4 6 8 10"/>
<dbReference type="EMBL" id="JN809249">
    <property type="protein sequence ID" value="AFA42947.1"/>
    <property type="molecule type" value="Genomic_DNA"/>
</dbReference>
<dbReference type="SMR" id="K9L4P7"/>
<dbReference type="BRENDA" id="1.1.3.4">
    <property type="organism ID" value="4606"/>
</dbReference>
<dbReference type="GO" id="GO:0005737">
    <property type="term" value="C:cytoplasm"/>
    <property type="evidence" value="ECO:0007669"/>
    <property type="project" value="UniProtKB-SubCell"/>
</dbReference>
<dbReference type="GO" id="GO:0005576">
    <property type="term" value="C:extracellular region"/>
    <property type="evidence" value="ECO:0007669"/>
    <property type="project" value="UniProtKB-SubCell"/>
</dbReference>
<dbReference type="GO" id="GO:0046562">
    <property type="term" value="F:beta-D-glucose oxidase activity"/>
    <property type="evidence" value="ECO:0007669"/>
    <property type="project" value="UniProtKB-EC"/>
</dbReference>
<dbReference type="GO" id="GO:0050660">
    <property type="term" value="F:flavin adenine dinucleotide binding"/>
    <property type="evidence" value="ECO:0007669"/>
    <property type="project" value="InterPro"/>
</dbReference>
<dbReference type="GO" id="GO:0044550">
    <property type="term" value="P:secondary metabolite biosynthetic process"/>
    <property type="evidence" value="ECO:0007669"/>
    <property type="project" value="UniProtKB-ARBA"/>
</dbReference>
<dbReference type="Gene3D" id="3.50.50.60">
    <property type="entry name" value="FAD/NAD(P)-binding domain"/>
    <property type="match status" value="1"/>
</dbReference>
<dbReference type="Gene3D" id="4.10.450.10">
    <property type="entry name" value="Glucose Oxidase, domain 2"/>
    <property type="match status" value="1"/>
</dbReference>
<dbReference type="Gene3D" id="3.30.560.10">
    <property type="entry name" value="Glucose Oxidase, domain 3"/>
    <property type="match status" value="1"/>
</dbReference>
<dbReference type="InterPro" id="IPR036188">
    <property type="entry name" value="FAD/NAD-bd_sf"/>
</dbReference>
<dbReference type="InterPro" id="IPR027424">
    <property type="entry name" value="Glucose_Oxidase_domain_2"/>
</dbReference>
<dbReference type="InterPro" id="IPR012132">
    <property type="entry name" value="GMC_OxRdtase"/>
</dbReference>
<dbReference type="InterPro" id="IPR000172">
    <property type="entry name" value="GMC_OxRdtase_N"/>
</dbReference>
<dbReference type="InterPro" id="IPR007867">
    <property type="entry name" value="GMC_OxRtase_C"/>
</dbReference>
<dbReference type="PANTHER" id="PTHR11552">
    <property type="entry name" value="GLUCOSE-METHANOL-CHOLINE GMC OXIDOREDUCTASE"/>
    <property type="match status" value="1"/>
</dbReference>
<dbReference type="PANTHER" id="PTHR11552:SF201">
    <property type="entry name" value="GLUCOSE-METHANOL-CHOLINE OXIDOREDUCTASE N-TERMINAL DOMAIN-CONTAINING PROTEIN"/>
    <property type="match status" value="1"/>
</dbReference>
<dbReference type="Pfam" id="PF05199">
    <property type="entry name" value="GMC_oxred_C"/>
    <property type="match status" value="1"/>
</dbReference>
<dbReference type="Pfam" id="PF00732">
    <property type="entry name" value="GMC_oxred_N"/>
    <property type="match status" value="1"/>
</dbReference>
<dbReference type="PIRSF" id="PIRSF000137">
    <property type="entry name" value="Alcohol_oxidase"/>
    <property type="match status" value="1"/>
</dbReference>
<dbReference type="SUPFAM" id="SSF54373">
    <property type="entry name" value="FAD-linked reductases, C-terminal domain"/>
    <property type="match status" value="1"/>
</dbReference>
<dbReference type="SUPFAM" id="SSF51905">
    <property type="entry name" value="FAD/NAD(P)-binding domain"/>
    <property type="match status" value="1"/>
</dbReference>
<dbReference type="PROSITE" id="PS00624">
    <property type="entry name" value="GMC_OXRED_2"/>
    <property type="match status" value="1"/>
</dbReference>
<accession>K9L4P7</accession>
<feature type="signal peptide" evidence="4">
    <location>
        <begin position="1"/>
        <end position="18"/>
    </location>
</feature>
<feature type="chain" id="PRO_5003932614" description="Glucose oxidase">
    <location>
        <begin position="19"/>
        <end position="604"/>
    </location>
</feature>
<feature type="active site" description="Proton acceptor" evidence="1">
    <location>
        <position position="537"/>
    </location>
</feature>
<feature type="binding site" evidence="1">
    <location>
        <position position="52"/>
    </location>
    <ligand>
        <name>FAD</name>
        <dbReference type="ChEBI" id="CHEBI:57692"/>
    </ligand>
</feature>
<feature type="binding site" evidence="1">
    <location>
        <position position="53"/>
    </location>
    <ligand>
        <name>FAD</name>
        <dbReference type="ChEBI" id="CHEBI:57692"/>
    </ligand>
</feature>
<feature type="binding site" evidence="1">
    <location>
        <position position="73"/>
    </location>
    <ligand>
        <name>FAD</name>
        <dbReference type="ChEBI" id="CHEBI:57692"/>
    </ligand>
</feature>
<feature type="binding site" evidence="1">
    <location>
        <position position="125"/>
    </location>
    <ligand>
        <name>FAD</name>
        <dbReference type="ChEBI" id="CHEBI:57692"/>
    </ligand>
</feature>
<feature type="binding site" evidence="1">
    <location>
        <position position="129"/>
    </location>
    <ligand>
        <name>FAD</name>
        <dbReference type="ChEBI" id="CHEBI:57692"/>
    </ligand>
</feature>
<feature type="binding site" evidence="1">
    <location>
        <position position="130"/>
    </location>
    <ligand>
        <name>FAD</name>
        <dbReference type="ChEBI" id="CHEBI:57692"/>
    </ligand>
</feature>
<feature type="binding site" evidence="1">
    <location>
        <position position="132"/>
    </location>
    <ligand>
        <name>FAD</name>
        <dbReference type="ChEBI" id="CHEBI:57692"/>
    </ligand>
</feature>
<feature type="binding site" evidence="1">
    <location>
        <position position="272"/>
    </location>
    <ligand>
        <name>FAD</name>
        <dbReference type="ChEBI" id="CHEBI:57692"/>
    </ligand>
</feature>
<feature type="binding site" evidence="1">
    <location>
        <position position="558"/>
    </location>
    <ligand>
        <name>O2</name>
        <dbReference type="ChEBI" id="CHEBI:15379"/>
    </ligand>
</feature>
<feature type="binding site" evidence="1">
    <location>
        <position position="559"/>
    </location>
    <ligand>
        <name>O2</name>
        <dbReference type="ChEBI" id="CHEBI:15379"/>
    </ligand>
</feature>
<feature type="binding site" evidence="1">
    <location>
        <position position="570"/>
    </location>
    <ligand>
        <name>FAD</name>
        <dbReference type="ChEBI" id="CHEBI:57692"/>
    </ligand>
</feature>
<feature type="binding site" evidence="1">
    <location>
        <position position="582"/>
    </location>
    <ligand>
        <name>FAD</name>
        <dbReference type="ChEBI" id="CHEBI:57692"/>
    </ligand>
</feature>
<feature type="glycosylation site" description="N-linked (GlcNAc...) asparagine" evidence="2">
    <location>
        <position position="111"/>
    </location>
</feature>
<feature type="glycosylation site" description="N-linked (GlcNAc...) asparagine" evidence="2">
    <location>
        <position position="213"/>
    </location>
</feature>
<feature type="glycosylation site" description="N-linked (GlcNAc...) asparagine" evidence="2">
    <location>
        <position position="278"/>
    </location>
</feature>
<feature type="glycosylation site" description="N-linked (GlcNAc...) asparagine" evidence="2">
    <location>
        <position position="409"/>
    </location>
</feature>
<feature type="glycosylation site" description="N-linked (GlcNAc...) asparagine" evidence="2">
    <location>
        <position position="531"/>
    </location>
</feature>
<feature type="disulfide bond" evidence="1">
    <location>
        <begin position="186"/>
        <end position="228"/>
    </location>
</feature>
<feature type="mutagenesis site" description="Significantly improves thermostability." evidence="9">
    <original>S</original>
    <variation>A</variation>
    <location>
        <position position="118"/>
    </location>
</feature>
<feature type="mutagenesis site" description="Significantly improves thermostability." evidence="9">
    <original>D</original>
    <variation>W</variation>
    <location>
        <position position="426"/>
    </location>
</feature>
<protein>
    <recommendedName>
        <fullName evidence="11">Glucose oxidase</fullName>
        <shortName evidence="12">GOD</shortName>
        <shortName evidence="11">GOX</shortName>
        <ecNumber evidence="3 4 6 8 10">1.1.3.4</ecNumber>
    </recommendedName>
    <alternativeName>
        <fullName evidence="13">Beta-D-glucose:oxygen 1-oxido-reductase</fullName>
    </alternativeName>
</protein>
<name>GOX_PENCH</name>
<proteinExistence type="evidence at protein level"/>
<keyword id="KW-0134">Cell wall</keyword>
<keyword id="KW-0963">Cytoplasm</keyword>
<keyword id="KW-0903">Direct protein sequencing</keyword>
<keyword id="KW-1015">Disulfide bond</keyword>
<keyword id="KW-0272">Extracellular matrix</keyword>
<keyword id="KW-0274">FAD</keyword>
<keyword id="KW-0285">Flavoprotein</keyword>
<keyword id="KW-0325">Glycoprotein</keyword>
<keyword id="KW-0560">Oxidoreductase</keyword>
<keyword id="KW-0964">Secreted</keyword>
<keyword id="KW-0732">Signal</keyword>
<evidence type="ECO:0000250" key="1">
    <source>
        <dbReference type="UniProtKB" id="P13006"/>
    </source>
</evidence>
<evidence type="ECO:0000255" key="2">
    <source>
        <dbReference type="PROSITE-ProRule" id="PRU00498"/>
    </source>
</evidence>
<evidence type="ECO:0000269" key="3">
    <source>
    </source>
</evidence>
<evidence type="ECO:0000269" key="4">
    <source>
    </source>
</evidence>
<evidence type="ECO:0000269" key="5">
    <source>
    </source>
</evidence>
<evidence type="ECO:0000269" key="6">
    <source>
    </source>
</evidence>
<evidence type="ECO:0000269" key="7">
    <source>
    </source>
</evidence>
<evidence type="ECO:0000269" key="8">
    <source>
    </source>
</evidence>
<evidence type="ECO:0000269" key="9">
    <source>
    </source>
</evidence>
<evidence type="ECO:0000269" key="10">
    <source>
    </source>
</evidence>
<evidence type="ECO:0000303" key="11">
    <source>
    </source>
</evidence>
<evidence type="ECO:0000303" key="12">
    <source>
    </source>
</evidence>
<evidence type="ECO:0000305" key="13"/>
<reference key="1">
    <citation type="journal article" date="2012" name="Biotechnol. Lett.">
        <title>High-level expression of the Penicillium notatum glucose oxidase gene in Pichia pastoris using codon optimization.</title>
        <authorList>
            <person name="Gao Z."/>
            <person name="Li Z."/>
            <person name="Zhang Y."/>
            <person name="Huang H."/>
            <person name="Li M."/>
            <person name="Zhou L."/>
            <person name="Tang Y."/>
            <person name="Yao B."/>
            <person name="Zhang W."/>
        </authorList>
    </citation>
    <scope>NUCLEOTIDE SEQUENCE [GENOMIC DNA]</scope>
    <scope>FUNCTION</scope>
    <scope>CATALYTIC ACTIVITY</scope>
    <scope>BIOPHYSICOCHEMICAL PROPERTIES</scope>
    <scope>BIOTECHNOLOGY</scope>
    <source>
        <strain>F4</strain>
    </source>
</reference>
<reference key="2">
    <citation type="journal article" date="2004" name="J. Appl. Microbiol.">
        <title>Penicillium chrysogenum glucose oxidase -- a study on its antifungal effects.</title>
        <authorList>
            <person name="Leiter E."/>
            <person name="Marx F."/>
            <person name="Pusztahelyi T."/>
            <person name="Haas H."/>
            <person name="Pocsi I."/>
        </authorList>
    </citation>
    <scope>PROTEIN SEQUENCE OF 19-32</scope>
    <scope>FUNCTION</scope>
    <scope>SUBUNIT</scope>
    <scope>CATALYTIC ACTIVITY</scope>
    <scope>BIOPHYSICOCHEMICAL PROPERTIES</scope>
    <scope>SUBSTRATE SPECIFICITY</scope>
    <scope>BIOTECHNOLOGY</scope>
</reference>
<reference key="3">
    <citation type="journal article" date="1987" name="J. Chromatogr. A">
        <title>Application of high-performance chromatographic and electrophoretic methods to the purification and characterization of glucose oxidase and catalase from Penicillium chrysogenum.</title>
        <authorList>
            <person name="Eriksson K.O."/>
            <person name="Kourteva I."/>
            <person name="Yao K.Q."/>
            <person name="Liao J.L."/>
            <person name="Kilar F."/>
            <person name="Hjerten S."/>
            <person name="Chaga G."/>
        </authorList>
    </citation>
    <scope>FUNCTION</scope>
    <scope>CATALYTIC ACTIVITY</scope>
    <scope>SUBUNIT</scope>
</reference>
<reference key="4">
    <citation type="journal article" date="2003" name="Acta Microbiol. Immunol. Hung.">
        <title>Autolysis and ageing of Penicillium chrysogenum under carbon starvation: respiration and glucose oxidase production.</title>
        <authorList>
            <person name="Sami L."/>
            <person name="Karaffa L."/>
            <person name="Emri T."/>
            <person name="Pocsi I."/>
        </authorList>
    </citation>
    <scope>FUNCTION</scope>
    <scope>CATALYTIC ACTIVITY</scope>
</reference>
<reference key="5">
    <citation type="journal article" date="2013" name="Biotechnol. Bioeng.">
        <title>Simultaneous utilization of glucose and gluconate in Penicillium chrysogenum during overflow metabolism.</title>
        <authorList>
            <person name="Schmitz K."/>
            <person name="Peter V."/>
            <person name="Meinert S."/>
            <person name="Kornfeld G."/>
            <person name="Hardiman T."/>
            <person name="Wiechert W."/>
            <person name="Noack S."/>
        </authorList>
    </citation>
    <scope>FUNCTION</scope>
    <scope>CATALYTIC ACTIVITY</scope>
</reference>
<reference key="6">
    <citation type="journal article" date="2013" name="J. Hazard. Mater.">
        <title>Bioleaching mechanism of heavy metals in the mixture of contaminated soil and slag by using indigenous Penicillium chrysogenum strain F1.</title>
        <authorList>
            <person name="Deng X."/>
            <person name="Chai L."/>
            <person name="Yang Z."/>
            <person name="Tang C."/>
            <person name="Wang Y."/>
            <person name="Shi Y."/>
        </authorList>
    </citation>
    <scope>SUBCELLULAR LOCATION</scope>
    <scope>CATALYTIC ACTIVITY</scope>
    <scope>BIOTECHNOLOGY</scope>
</reference>
<reference key="7">
    <citation type="journal article" date="2013" name="Regul. Toxicol. Pharmacol.">
        <title>Safety evaluation of glucose oxidase from Penicillium chrysogenum.</title>
        <authorList>
            <person name="Konishi T."/>
            <person name="Aoshima T."/>
            <person name="Mizuhashi F."/>
            <person name="Choi S.S."/>
            <person name="Roberts A."/>
        </authorList>
    </citation>
    <scope>BIOTECHNOLOGY</scope>
</reference>
<reference key="8">
    <citation type="journal article" date="2018" name="Int. J. Mol. Sci.">
        <title>Enhanced thermostability of glucose oxidase through computer-aided molecular design.</title>
        <authorList>
            <person name="Ning X."/>
            <person name="Zhang Y."/>
            <person name="Yuan T."/>
            <person name="Li Q."/>
            <person name="Tian J."/>
            <person name="Guan W."/>
            <person name="Liu B."/>
            <person name="Zhang W."/>
            <person name="Xu X."/>
            <person name="Zhang Y."/>
        </authorList>
    </citation>
    <scope>MUTAGENESIS OF SER-118 AND ASP-426</scope>
</reference>
<gene>
    <name evidence="12" type="primary">GOD</name>
</gene>
<comment type="function">
    <text evidence="3 4 6 8 10">Glucose oxidase catalyzes the oxidation of beta-D-glucose to D-glucono-delta-lactone and hydrogen peroxide in the presence of molecular oxygen (PubMed:12793202, PubMed:15546411, PubMed:23352906, PubMed:23775209, PubMed:3116021). The enzyme also catalyzes the reaction with D-xylose but at a much lower rate (PubMed:15546411). Shows any activities against D-fructose, D-galactose and D-arabinose (PubMed:15546411). The enzyme is cytotoxic for a series of bacteria, yeasts and filamentous fungi and acts primarily via the liberation of H(2)O(2), which is a harmful oxidative stress-generating agent (PubMed:15546411).</text>
</comment>
<comment type="catalytic activity">
    <reaction evidence="3 4 6 8 10">
        <text>beta-D-glucose + O2 = D-glucono-1,5-lactone + H2O2</text>
        <dbReference type="Rhea" id="RHEA:11428"/>
        <dbReference type="ChEBI" id="CHEBI:15379"/>
        <dbReference type="ChEBI" id="CHEBI:15903"/>
        <dbReference type="ChEBI" id="CHEBI:16217"/>
        <dbReference type="ChEBI" id="CHEBI:16240"/>
        <dbReference type="EC" id="1.1.3.4"/>
    </reaction>
    <physiologicalReaction direction="left-to-right" evidence="3 4 6 8 10">
        <dbReference type="Rhea" id="RHEA:11429"/>
    </physiologicalReaction>
</comment>
<comment type="cofactor">
    <cofactor evidence="1">
        <name>FAD</name>
        <dbReference type="ChEBI" id="CHEBI:57692"/>
    </cofactor>
</comment>
<comment type="biophysicochemical properties">
    <kinetics>
        <KM evidence="4">9.5 mM for D-gludose</KM>
        <KM evidence="4">690 mM for D-xylose</KM>
    </kinetics>
    <phDependence>
        <text evidence="5">Optimum pH is 6.2.</text>
    </phDependence>
    <temperatureDependence>
        <text evidence="5">Optimum temperature is 35 to 40 degrees Celsius.</text>
    </temperatureDependence>
</comment>
<comment type="subunit">
    <text evidence="4 10">Homodimer.</text>
</comment>
<comment type="subcellular location">
    <subcellularLocation>
        <location evidence="6">Secreted</location>
    </subcellularLocation>
    <subcellularLocation>
        <location evidence="1">Secreted</location>
        <location evidence="1">Cell wall</location>
    </subcellularLocation>
    <subcellularLocation>
        <location evidence="1">Cytoplasm</location>
    </subcellularLocation>
    <subcellularLocation>
        <location evidence="1">Secreted</location>
        <location evidence="1">Extracellular space</location>
        <location evidence="1">Extracellular matrix</location>
    </subcellularLocation>
</comment>
<comment type="biotechnology">
    <text evidence="3 5 6 7">Glucose oxidase is interetsing for applications in glucose biosensor production, the disinfection of medical implants or in the food industry as an antimicrobial and/or preservative agent (PubMed:12793202). Glucose oxidase is used in the food and beverage industry as a preservative and stabilizer as it is safe for human consumption (PubMed:23454104). In bread industry, the addition of glucose oxidase induces positive effects with regard to loaf volume, bread shape, and texture, but had no effect on bread color, smoothness, elasticity, or mouth feel (PubMed:22052258). Finally, P.chrysogenum can be used to remove heavy metals from polluted soil and smeltery slag via production of organic acids such as gluconic acid, an important leaching agent (PubMed:23352906).</text>
</comment>
<comment type="similarity">
    <text evidence="13">Belongs to the GMC oxidoreductase family.</text>
</comment>